<proteinExistence type="evidence at transcript level"/>
<reference key="1">
    <citation type="journal article" date="2005" name="Science">
        <title>The transcriptional landscape of the mammalian genome.</title>
        <authorList>
            <person name="Carninci P."/>
            <person name="Kasukawa T."/>
            <person name="Katayama S."/>
            <person name="Gough J."/>
            <person name="Frith M.C."/>
            <person name="Maeda N."/>
            <person name="Oyama R."/>
            <person name="Ravasi T."/>
            <person name="Lenhard B."/>
            <person name="Wells C."/>
            <person name="Kodzius R."/>
            <person name="Shimokawa K."/>
            <person name="Bajic V.B."/>
            <person name="Brenner S.E."/>
            <person name="Batalov S."/>
            <person name="Forrest A.R."/>
            <person name="Zavolan M."/>
            <person name="Davis M.J."/>
            <person name="Wilming L.G."/>
            <person name="Aidinis V."/>
            <person name="Allen J.E."/>
            <person name="Ambesi-Impiombato A."/>
            <person name="Apweiler R."/>
            <person name="Aturaliya R.N."/>
            <person name="Bailey T.L."/>
            <person name="Bansal M."/>
            <person name="Baxter L."/>
            <person name="Beisel K.W."/>
            <person name="Bersano T."/>
            <person name="Bono H."/>
            <person name="Chalk A.M."/>
            <person name="Chiu K.P."/>
            <person name="Choudhary V."/>
            <person name="Christoffels A."/>
            <person name="Clutterbuck D.R."/>
            <person name="Crowe M.L."/>
            <person name="Dalla E."/>
            <person name="Dalrymple B.P."/>
            <person name="de Bono B."/>
            <person name="Della Gatta G."/>
            <person name="di Bernardo D."/>
            <person name="Down T."/>
            <person name="Engstrom P."/>
            <person name="Fagiolini M."/>
            <person name="Faulkner G."/>
            <person name="Fletcher C.F."/>
            <person name="Fukushima T."/>
            <person name="Furuno M."/>
            <person name="Futaki S."/>
            <person name="Gariboldi M."/>
            <person name="Georgii-Hemming P."/>
            <person name="Gingeras T.R."/>
            <person name="Gojobori T."/>
            <person name="Green R.E."/>
            <person name="Gustincich S."/>
            <person name="Harbers M."/>
            <person name="Hayashi Y."/>
            <person name="Hensch T.K."/>
            <person name="Hirokawa N."/>
            <person name="Hill D."/>
            <person name="Huminiecki L."/>
            <person name="Iacono M."/>
            <person name="Ikeo K."/>
            <person name="Iwama A."/>
            <person name="Ishikawa T."/>
            <person name="Jakt M."/>
            <person name="Kanapin A."/>
            <person name="Katoh M."/>
            <person name="Kawasawa Y."/>
            <person name="Kelso J."/>
            <person name="Kitamura H."/>
            <person name="Kitano H."/>
            <person name="Kollias G."/>
            <person name="Krishnan S.P."/>
            <person name="Kruger A."/>
            <person name="Kummerfeld S.K."/>
            <person name="Kurochkin I.V."/>
            <person name="Lareau L.F."/>
            <person name="Lazarevic D."/>
            <person name="Lipovich L."/>
            <person name="Liu J."/>
            <person name="Liuni S."/>
            <person name="McWilliam S."/>
            <person name="Madan Babu M."/>
            <person name="Madera M."/>
            <person name="Marchionni L."/>
            <person name="Matsuda H."/>
            <person name="Matsuzawa S."/>
            <person name="Miki H."/>
            <person name="Mignone F."/>
            <person name="Miyake S."/>
            <person name="Morris K."/>
            <person name="Mottagui-Tabar S."/>
            <person name="Mulder N."/>
            <person name="Nakano N."/>
            <person name="Nakauchi H."/>
            <person name="Ng P."/>
            <person name="Nilsson R."/>
            <person name="Nishiguchi S."/>
            <person name="Nishikawa S."/>
            <person name="Nori F."/>
            <person name="Ohara O."/>
            <person name="Okazaki Y."/>
            <person name="Orlando V."/>
            <person name="Pang K.C."/>
            <person name="Pavan W.J."/>
            <person name="Pavesi G."/>
            <person name="Pesole G."/>
            <person name="Petrovsky N."/>
            <person name="Piazza S."/>
            <person name="Reed J."/>
            <person name="Reid J.F."/>
            <person name="Ring B.Z."/>
            <person name="Ringwald M."/>
            <person name="Rost B."/>
            <person name="Ruan Y."/>
            <person name="Salzberg S.L."/>
            <person name="Sandelin A."/>
            <person name="Schneider C."/>
            <person name="Schoenbach C."/>
            <person name="Sekiguchi K."/>
            <person name="Semple C.A."/>
            <person name="Seno S."/>
            <person name="Sessa L."/>
            <person name="Sheng Y."/>
            <person name="Shibata Y."/>
            <person name="Shimada H."/>
            <person name="Shimada K."/>
            <person name="Silva D."/>
            <person name="Sinclair B."/>
            <person name="Sperling S."/>
            <person name="Stupka E."/>
            <person name="Sugiura K."/>
            <person name="Sultana R."/>
            <person name="Takenaka Y."/>
            <person name="Taki K."/>
            <person name="Tammoja K."/>
            <person name="Tan S.L."/>
            <person name="Tang S."/>
            <person name="Taylor M.S."/>
            <person name="Tegner J."/>
            <person name="Teichmann S.A."/>
            <person name="Ueda H.R."/>
            <person name="van Nimwegen E."/>
            <person name="Verardo R."/>
            <person name="Wei C.L."/>
            <person name="Yagi K."/>
            <person name="Yamanishi H."/>
            <person name="Zabarovsky E."/>
            <person name="Zhu S."/>
            <person name="Zimmer A."/>
            <person name="Hide W."/>
            <person name="Bult C."/>
            <person name="Grimmond S.M."/>
            <person name="Teasdale R.D."/>
            <person name="Liu E.T."/>
            <person name="Brusic V."/>
            <person name="Quackenbush J."/>
            <person name="Wahlestedt C."/>
            <person name="Mattick J.S."/>
            <person name="Hume D.A."/>
            <person name="Kai C."/>
            <person name="Sasaki D."/>
            <person name="Tomaru Y."/>
            <person name="Fukuda S."/>
            <person name="Kanamori-Katayama M."/>
            <person name="Suzuki M."/>
            <person name="Aoki J."/>
            <person name="Arakawa T."/>
            <person name="Iida J."/>
            <person name="Imamura K."/>
            <person name="Itoh M."/>
            <person name="Kato T."/>
            <person name="Kawaji H."/>
            <person name="Kawagashira N."/>
            <person name="Kawashima T."/>
            <person name="Kojima M."/>
            <person name="Kondo S."/>
            <person name="Konno H."/>
            <person name="Nakano K."/>
            <person name="Ninomiya N."/>
            <person name="Nishio T."/>
            <person name="Okada M."/>
            <person name="Plessy C."/>
            <person name="Shibata K."/>
            <person name="Shiraki T."/>
            <person name="Suzuki S."/>
            <person name="Tagami M."/>
            <person name="Waki K."/>
            <person name="Watahiki A."/>
            <person name="Okamura-Oho Y."/>
            <person name="Suzuki H."/>
            <person name="Kawai J."/>
            <person name="Hayashizaki Y."/>
        </authorList>
    </citation>
    <scope>NUCLEOTIDE SEQUENCE [LARGE SCALE MRNA] (ISOFORM 2)</scope>
    <source>
        <strain>C57BL/6J</strain>
        <tissue>Stomach</tissue>
    </source>
</reference>
<reference key="2">
    <citation type="journal article" date="2004" name="Genome Res.">
        <title>The status, quality, and expansion of the NIH full-length cDNA project: the Mammalian Gene Collection (MGC).</title>
        <authorList>
            <consortium name="The MGC Project Team"/>
        </authorList>
    </citation>
    <scope>NUCLEOTIDE SEQUENCE [LARGE SCALE MRNA] (ISOFORM 1)</scope>
</reference>
<sequence length="1034" mass="115605">MIMEELQGSDTPRAGLEMSKRDILRHTKRAWAPLDGHLLPDSEEENPMVTMYVQENSKQESIQQWLDSGFFVSVNENFQQTINHTASLHEQGIIQMTVKDYMRSLHQFSETPTLSRGTSFNSCYSTTGVPQSIPEWLEFWEKDPVEILLDLGFGADEPDICTQIPARFLGYSSAARGINIHVFLEAQKQRMDFENPDLYGRFQQLEILDHVTNAFSSLLDGVKTQQNQHEEKAERQAMQNPSSSGAKEHKRKMSQLLKRASRQTSRMDGNPALSKSCKTEHEIPTLPTKPWDPRVELQVASISHDASQMLPLIECGSAQVHNDLSPCPPLCPPPHALLDKPWPCSCTLAKQSPHTCLSEGSVRRRNWKEKWNHMDRLKNLSHIVSKGPDSFEMEEVQSFEEDTGNPLILTSGIVGTRVDRTNSCQSDSSGFLEELPELQPLQVSSMTGSQSPTVCRGCKPRDQSHSPASQQDSLQESYGSKSKSMTSSSLLSQDWSTLEENASASVVEEELQLKAMEEPPEIVNPDMTLIKTIMVGEHPESVAGPVVTSTSTCNNTMGVLVTHVTEKEDRSVGHKGTRKMLIQRHHFESPRSFRIDQPSDNFYHVDSEITKTEDNCKVCPDTKQSSLVQERPAQHSHQHRGAMPYKGDLVQTSEKSIPHLDKPPGHVPTDSNAASSWSVTTQMSSNLVSAAQRVADLGTYNKGTAFECTPCDPLNTTDLKLQTETRQVKDVAVQTYAHECKLRPSHNDFIHGPRPLAKSISLDTGFPSISATGFCHTIPAHCCVCCHHCPNCQWRRQSPGPEPSICRHSLYSQAEDPKVQFMKTLKILQDTTVRDLCSCTVYEMETMKMVCQSFREHLEEIEQHFMGQQALYPRDMSEEEREEAEYLRTLREALRQQVAELAFQLGDRARQIKEGILLQLDLLCEELPEHCDNLPQCNWTEGKHGQRSCVQTHAVAPDPTLPASSGQWTPCSGMTQPVALSPSHLETRGGISLQSPARAESGPGPSLSHVGEKSLLDQSGFDDLCTKCNVQEQL</sequence>
<protein>
    <recommendedName>
        <fullName evidence="4">Protein ITPRID1</fullName>
    </recommendedName>
    <alternativeName>
        <fullName>Coiled-coil domain-containing protein 129</fullName>
    </alternativeName>
    <alternativeName>
        <fullName evidence="4">ITPR-interacting domain-containing protein 1</fullName>
    </alternativeName>
</protein>
<name>ITPI1_MOUSE</name>
<comment type="alternative products">
    <event type="alternative splicing"/>
    <isoform>
        <id>Q14B48-1</id>
        <name>1</name>
        <sequence type="displayed"/>
    </isoform>
    <isoform>
        <id>Q14B48-2</id>
        <name>2</name>
        <sequence type="described" ref="VSP_022256"/>
    </isoform>
</comment>
<comment type="sequence caution" evidence="4">
    <conflict type="erroneous initiation">
        <sequence resource="EMBL-CDS" id="BAC39386"/>
    </conflict>
    <text>Extended N-terminus.</text>
</comment>
<organism>
    <name type="scientific">Mus musculus</name>
    <name type="common">Mouse</name>
    <dbReference type="NCBI Taxonomy" id="10090"/>
    <lineage>
        <taxon>Eukaryota</taxon>
        <taxon>Metazoa</taxon>
        <taxon>Chordata</taxon>
        <taxon>Craniata</taxon>
        <taxon>Vertebrata</taxon>
        <taxon>Euteleostomi</taxon>
        <taxon>Mammalia</taxon>
        <taxon>Eutheria</taxon>
        <taxon>Euarchontoglires</taxon>
        <taxon>Glires</taxon>
        <taxon>Rodentia</taxon>
        <taxon>Myomorpha</taxon>
        <taxon>Muroidea</taxon>
        <taxon>Muridae</taxon>
        <taxon>Murinae</taxon>
        <taxon>Mus</taxon>
        <taxon>Mus</taxon>
    </lineage>
</organism>
<gene>
    <name type="primary">Itprid1</name>
    <name evidence="5" type="synonym">Ccdc129</name>
</gene>
<accession>Q14B48</accession>
<accession>Q8BUH5</accession>
<dbReference type="EMBL" id="AK085190">
    <property type="protein sequence ID" value="BAC39386.1"/>
    <property type="status" value="ALT_INIT"/>
    <property type="molecule type" value="mRNA"/>
</dbReference>
<dbReference type="EMBL" id="BC116335">
    <property type="protein sequence ID" value="AAI16336.1"/>
    <property type="molecule type" value="mRNA"/>
</dbReference>
<dbReference type="CCDS" id="CCDS39493.1">
    <molecule id="Q14B48-1"/>
</dbReference>
<dbReference type="RefSeq" id="NP_001075134.1">
    <molecule id="Q14B48-1"/>
    <property type="nucleotide sequence ID" value="NM_001081665.2"/>
</dbReference>
<dbReference type="RefSeq" id="NP_001405102.1">
    <molecule id="Q14B48-2"/>
    <property type="nucleotide sequence ID" value="NM_001418173.1"/>
</dbReference>
<dbReference type="RefSeq" id="XP_017177013.1">
    <molecule id="Q14B48-1"/>
    <property type="nucleotide sequence ID" value="XM_017321524.3"/>
</dbReference>
<dbReference type="SMR" id="Q14B48"/>
<dbReference type="STRING" id="10090.ENSMUSP00000045332"/>
<dbReference type="PhosphoSitePlus" id="Q14B48"/>
<dbReference type="PaxDb" id="10090-ENSMUSP00000045332"/>
<dbReference type="ProteomicsDB" id="281240">
    <molecule id="Q14B48-1"/>
</dbReference>
<dbReference type="ProteomicsDB" id="281241">
    <molecule id="Q14B48-2"/>
</dbReference>
<dbReference type="Antibodypedia" id="12709">
    <property type="antibodies" value="47 antibodies from 12 providers"/>
</dbReference>
<dbReference type="Ensembl" id="ENSMUST00000044729.7">
    <molecule id="Q14B48-1"/>
    <property type="protein sequence ID" value="ENSMUSP00000045332.7"/>
    <property type="gene ID" value="ENSMUSG00000037973.7"/>
</dbReference>
<dbReference type="GeneID" id="232016"/>
<dbReference type="KEGG" id="mmu:232016"/>
<dbReference type="UCSC" id="uc009cax.1">
    <molecule id="Q14B48-1"/>
    <property type="organism name" value="mouse"/>
</dbReference>
<dbReference type="AGR" id="MGI:2685304"/>
<dbReference type="CTD" id="223075"/>
<dbReference type="MGI" id="MGI:2685304">
    <property type="gene designation" value="Itprid1"/>
</dbReference>
<dbReference type="VEuPathDB" id="HostDB:ENSMUSG00000037973"/>
<dbReference type="eggNOG" id="ENOG502QU3K">
    <property type="taxonomic scope" value="Eukaryota"/>
</dbReference>
<dbReference type="GeneTree" id="ENSGT00940000161762"/>
<dbReference type="HOGENOM" id="CLU_313444_0_0_1"/>
<dbReference type="InParanoid" id="Q14B48"/>
<dbReference type="OMA" id="PDICTRI"/>
<dbReference type="OrthoDB" id="9836301at2759"/>
<dbReference type="PhylomeDB" id="Q14B48"/>
<dbReference type="TreeFam" id="TF331566"/>
<dbReference type="BioGRID-ORCS" id="232016">
    <property type="hits" value="3 hits in 76 CRISPR screens"/>
</dbReference>
<dbReference type="PRO" id="PR:Q14B48"/>
<dbReference type="Proteomes" id="UP000000589">
    <property type="component" value="Chromosome 6"/>
</dbReference>
<dbReference type="RNAct" id="Q14B48">
    <property type="molecule type" value="protein"/>
</dbReference>
<dbReference type="Bgee" id="ENSMUSG00000037973">
    <property type="expression patterns" value="Expressed in mesodermal cell in embryo and 17 other cell types or tissues"/>
</dbReference>
<dbReference type="GO" id="GO:0005102">
    <property type="term" value="F:signaling receptor binding"/>
    <property type="evidence" value="ECO:0007669"/>
    <property type="project" value="InterPro"/>
</dbReference>
<dbReference type="InterPro" id="IPR029325">
    <property type="entry name" value="ITPR-bd"/>
</dbReference>
<dbReference type="InterPro" id="IPR029326">
    <property type="entry name" value="SSFA2_C"/>
</dbReference>
<dbReference type="InterPro" id="IPR043444">
    <property type="entry name" value="TESPA1-like"/>
</dbReference>
<dbReference type="PANTHER" id="PTHR17469:SF14">
    <property type="entry name" value="PROTEIN ITPRID1"/>
    <property type="match status" value="1"/>
</dbReference>
<dbReference type="PANTHER" id="PTHR17469">
    <property type="entry name" value="SPERM SPECIFIC ANTIGEN 2-RELATED"/>
    <property type="match status" value="1"/>
</dbReference>
<dbReference type="Pfam" id="PF14722">
    <property type="entry name" value="KRAP_IP3R_bind"/>
    <property type="match status" value="1"/>
</dbReference>
<dbReference type="Pfam" id="PF14723">
    <property type="entry name" value="SSFA2_C"/>
    <property type="match status" value="1"/>
</dbReference>
<dbReference type="SMART" id="SM01257">
    <property type="entry name" value="KRAP_IP3R_bind"/>
    <property type="match status" value="1"/>
</dbReference>
<keyword id="KW-0025">Alternative splicing</keyword>
<keyword id="KW-0175">Coiled coil</keyword>
<keyword id="KW-1185">Reference proteome</keyword>
<feature type="chain" id="PRO_0000270964" description="Protein ITPRID1">
    <location>
        <begin position="1"/>
        <end position="1034"/>
    </location>
</feature>
<feature type="region of interest" description="Disordered" evidence="2">
    <location>
        <begin position="223"/>
        <end position="290"/>
    </location>
</feature>
<feature type="region of interest" description="Disordered" evidence="2">
    <location>
        <begin position="442"/>
        <end position="486"/>
    </location>
</feature>
<feature type="region of interest" description="Disordered" evidence="2">
    <location>
        <begin position="624"/>
        <end position="678"/>
    </location>
</feature>
<feature type="coiled-coil region" evidence="1">
    <location>
        <begin position="843"/>
        <end position="902"/>
    </location>
</feature>
<feature type="compositionally biased region" description="Polar residues" evidence="2">
    <location>
        <begin position="443"/>
        <end position="453"/>
    </location>
</feature>
<feature type="compositionally biased region" description="Polar residues" evidence="2">
    <location>
        <begin position="465"/>
        <end position="476"/>
    </location>
</feature>
<feature type="compositionally biased region" description="Low complexity" evidence="2">
    <location>
        <begin position="477"/>
        <end position="486"/>
    </location>
</feature>
<feature type="compositionally biased region" description="Polar residues" evidence="2">
    <location>
        <begin position="669"/>
        <end position="678"/>
    </location>
</feature>
<feature type="splice variant" id="VSP_022256" description="In isoform 2." evidence="3">
    <location>
        <begin position="1"/>
        <end position="190"/>
    </location>
</feature>
<evidence type="ECO:0000255" key="1"/>
<evidence type="ECO:0000256" key="2">
    <source>
        <dbReference type="SAM" id="MobiDB-lite"/>
    </source>
</evidence>
<evidence type="ECO:0000303" key="3">
    <source>
    </source>
</evidence>
<evidence type="ECO:0000305" key="4"/>
<evidence type="ECO:0000312" key="5">
    <source>
        <dbReference type="MGI" id="MGI:2685304"/>
    </source>
</evidence>